<protein>
    <recommendedName>
        <fullName evidence="1">2,3-bisphosphoglycerate-independent phosphoglycerate mutase</fullName>
        <shortName evidence="1">BPG-independent PGAM</shortName>
        <shortName evidence="1">Phosphoglyceromutase</shortName>
        <shortName evidence="1">iPGM</shortName>
        <ecNumber evidence="1">5.4.2.12</ecNumber>
    </recommendedName>
</protein>
<comment type="function">
    <text evidence="1">Catalyzes the interconversion of 2-phosphoglycerate and 3-phosphoglycerate.</text>
</comment>
<comment type="catalytic activity">
    <reaction evidence="1">
        <text>(2R)-2-phosphoglycerate = (2R)-3-phosphoglycerate</text>
        <dbReference type="Rhea" id="RHEA:15901"/>
        <dbReference type="ChEBI" id="CHEBI:58272"/>
        <dbReference type="ChEBI" id="CHEBI:58289"/>
        <dbReference type="EC" id="5.4.2.12"/>
    </reaction>
</comment>
<comment type="cofactor">
    <cofactor evidence="1">
        <name>Mn(2+)</name>
        <dbReference type="ChEBI" id="CHEBI:29035"/>
    </cofactor>
    <text evidence="1">Binds 2 manganese ions per subunit.</text>
</comment>
<comment type="pathway">
    <text evidence="1">Carbohydrate degradation; glycolysis; pyruvate from D-glyceraldehyde 3-phosphate: step 3/5.</text>
</comment>
<comment type="subunit">
    <text evidence="1">Monomer.</text>
</comment>
<comment type="similarity">
    <text evidence="1">Belongs to the BPG-independent phosphoglycerate mutase family.</text>
</comment>
<dbReference type="EC" id="5.4.2.12" evidence="1"/>
<dbReference type="EMBL" id="CP000503">
    <property type="protein sequence ID" value="ABM26840.1"/>
    <property type="molecule type" value="Genomic_DNA"/>
</dbReference>
<dbReference type="RefSeq" id="WP_011791261.1">
    <property type="nucleotide sequence ID" value="NC_008750.1"/>
</dbReference>
<dbReference type="SMR" id="A1RQ95"/>
<dbReference type="KEGG" id="shw:Sputw3181_4038"/>
<dbReference type="HOGENOM" id="CLU_026099_2_0_6"/>
<dbReference type="UniPathway" id="UPA00109">
    <property type="reaction ID" value="UER00186"/>
</dbReference>
<dbReference type="Proteomes" id="UP000002597">
    <property type="component" value="Chromosome"/>
</dbReference>
<dbReference type="GO" id="GO:0005829">
    <property type="term" value="C:cytosol"/>
    <property type="evidence" value="ECO:0007669"/>
    <property type="project" value="TreeGrafter"/>
</dbReference>
<dbReference type="GO" id="GO:0030145">
    <property type="term" value="F:manganese ion binding"/>
    <property type="evidence" value="ECO:0007669"/>
    <property type="project" value="UniProtKB-UniRule"/>
</dbReference>
<dbReference type="GO" id="GO:0004619">
    <property type="term" value="F:phosphoglycerate mutase activity"/>
    <property type="evidence" value="ECO:0007669"/>
    <property type="project" value="UniProtKB-EC"/>
</dbReference>
<dbReference type="GO" id="GO:0006007">
    <property type="term" value="P:glucose catabolic process"/>
    <property type="evidence" value="ECO:0007669"/>
    <property type="project" value="InterPro"/>
</dbReference>
<dbReference type="GO" id="GO:0006096">
    <property type="term" value="P:glycolytic process"/>
    <property type="evidence" value="ECO:0007669"/>
    <property type="project" value="UniProtKB-UniRule"/>
</dbReference>
<dbReference type="CDD" id="cd16010">
    <property type="entry name" value="iPGM"/>
    <property type="match status" value="1"/>
</dbReference>
<dbReference type="FunFam" id="3.40.1450.10:FF:000001">
    <property type="entry name" value="2,3-bisphosphoglycerate-independent phosphoglycerate mutase"/>
    <property type="match status" value="1"/>
</dbReference>
<dbReference type="FunFam" id="3.40.720.10:FF:000001">
    <property type="entry name" value="2,3-bisphosphoglycerate-independent phosphoglycerate mutase"/>
    <property type="match status" value="1"/>
</dbReference>
<dbReference type="Gene3D" id="3.40.720.10">
    <property type="entry name" value="Alkaline Phosphatase, subunit A"/>
    <property type="match status" value="1"/>
</dbReference>
<dbReference type="Gene3D" id="3.40.1450.10">
    <property type="entry name" value="BPG-independent phosphoglycerate mutase, domain B"/>
    <property type="match status" value="1"/>
</dbReference>
<dbReference type="HAMAP" id="MF_01038">
    <property type="entry name" value="GpmI"/>
    <property type="match status" value="1"/>
</dbReference>
<dbReference type="InterPro" id="IPR017850">
    <property type="entry name" value="Alkaline_phosphatase_core_sf"/>
</dbReference>
<dbReference type="InterPro" id="IPR011258">
    <property type="entry name" value="BPG-indep_PGM_N"/>
</dbReference>
<dbReference type="InterPro" id="IPR006124">
    <property type="entry name" value="Metalloenzyme"/>
</dbReference>
<dbReference type="InterPro" id="IPR036646">
    <property type="entry name" value="PGAM_B_sf"/>
</dbReference>
<dbReference type="InterPro" id="IPR005995">
    <property type="entry name" value="Pgm_bpd_ind"/>
</dbReference>
<dbReference type="NCBIfam" id="TIGR01307">
    <property type="entry name" value="pgm_bpd_ind"/>
    <property type="match status" value="1"/>
</dbReference>
<dbReference type="NCBIfam" id="NF003897">
    <property type="entry name" value="PRK05434.1-5"/>
    <property type="match status" value="1"/>
</dbReference>
<dbReference type="PANTHER" id="PTHR31637">
    <property type="entry name" value="2,3-BISPHOSPHOGLYCERATE-INDEPENDENT PHOSPHOGLYCERATE MUTASE"/>
    <property type="match status" value="1"/>
</dbReference>
<dbReference type="PANTHER" id="PTHR31637:SF0">
    <property type="entry name" value="2,3-BISPHOSPHOGLYCERATE-INDEPENDENT PHOSPHOGLYCERATE MUTASE"/>
    <property type="match status" value="1"/>
</dbReference>
<dbReference type="Pfam" id="PF06415">
    <property type="entry name" value="iPGM_N"/>
    <property type="match status" value="1"/>
</dbReference>
<dbReference type="Pfam" id="PF01676">
    <property type="entry name" value="Metalloenzyme"/>
    <property type="match status" value="1"/>
</dbReference>
<dbReference type="PIRSF" id="PIRSF001492">
    <property type="entry name" value="IPGAM"/>
    <property type="match status" value="1"/>
</dbReference>
<dbReference type="SUPFAM" id="SSF64158">
    <property type="entry name" value="2,3-Bisphosphoglycerate-independent phosphoglycerate mutase, substrate-binding domain"/>
    <property type="match status" value="1"/>
</dbReference>
<dbReference type="SUPFAM" id="SSF53649">
    <property type="entry name" value="Alkaline phosphatase-like"/>
    <property type="match status" value="1"/>
</dbReference>
<reference key="1">
    <citation type="submission" date="2006-12" db="EMBL/GenBank/DDBJ databases">
        <title>Complete sequence of Shewanella sp. W3-18-1.</title>
        <authorList>
            <consortium name="US DOE Joint Genome Institute"/>
            <person name="Copeland A."/>
            <person name="Lucas S."/>
            <person name="Lapidus A."/>
            <person name="Barry K."/>
            <person name="Detter J.C."/>
            <person name="Glavina del Rio T."/>
            <person name="Hammon N."/>
            <person name="Israni S."/>
            <person name="Dalin E."/>
            <person name="Tice H."/>
            <person name="Pitluck S."/>
            <person name="Chain P."/>
            <person name="Malfatti S."/>
            <person name="Shin M."/>
            <person name="Vergez L."/>
            <person name="Schmutz J."/>
            <person name="Larimer F."/>
            <person name="Land M."/>
            <person name="Hauser L."/>
            <person name="Kyrpides N."/>
            <person name="Lykidis A."/>
            <person name="Tiedje J."/>
            <person name="Richardson P."/>
        </authorList>
    </citation>
    <scope>NUCLEOTIDE SEQUENCE [LARGE SCALE GENOMIC DNA]</scope>
    <source>
        <strain>W3-18-1</strain>
    </source>
</reference>
<keyword id="KW-0324">Glycolysis</keyword>
<keyword id="KW-0413">Isomerase</keyword>
<keyword id="KW-0464">Manganese</keyword>
<keyword id="KW-0479">Metal-binding</keyword>
<accession>A1RQ95</accession>
<name>GPMI_SHESW</name>
<evidence type="ECO:0000255" key="1">
    <source>
        <dbReference type="HAMAP-Rule" id="MF_01038"/>
    </source>
</evidence>
<gene>
    <name evidence="1" type="primary">gpmI</name>
    <name type="ordered locus">Sputw3181_4038</name>
</gene>
<feature type="chain" id="PRO_1000064009" description="2,3-bisphosphoglycerate-independent phosphoglycerate mutase">
    <location>
        <begin position="1"/>
        <end position="514"/>
    </location>
</feature>
<feature type="active site" description="Phosphoserine intermediate" evidence="1">
    <location>
        <position position="64"/>
    </location>
</feature>
<feature type="binding site" evidence="1">
    <location>
        <position position="14"/>
    </location>
    <ligand>
        <name>Mn(2+)</name>
        <dbReference type="ChEBI" id="CHEBI:29035"/>
        <label>2</label>
    </ligand>
</feature>
<feature type="binding site" evidence="1">
    <location>
        <position position="64"/>
    </location>
    <ligand>
        <name>Mn(2+)</name>
        <dbReference type="ChEBI" id="CHEBI:29035"/>
        <label>2</label>
    </ligand>
</feature>
<feature type="binding site" evidence="1">
    <location>
        <position position="125"/>
    </location>
    <ligand>
        <name>substrate</name>
    </ligand>
</feature>
<feature type="binding site" evidence="1">
    <location>
        <begin position="155"/>
        <end position="156"/>
    </location>
    <ligand>
        <name>substrate</name>
    </ligand>
</feature>
<feature type="binding site" evidence="1">
    <location>
        <position position="187"/>
    </location>
    <ligand>
        <name>substrate</name>
    </ligand>
</feature>
<feature type="binding site" evidence="1">
    <location>
        <position position="193"/>
    </location>
    <ligand>
        <name>substrate</name>
    </ligand>
</feature>
<feature type="binding site" evidence="1">
    <location>
        <begin position="263"/>
        <end position="266"/>
    </location>
    <ligand>
        <name>substrate</name>
    </ligand>
</feature>
<feature type="binding site" evidence="1">
    <location>
        <position position="336"/>
    </location>
    <ligand>
        <name>substrate</name>
    </ligand>
</feature>
<feature type="binding site" evidence="1">
    <location>
        <position position="403"/>
    </location>
    <ligand>
        <name>Mn(2+)</name>
        <dbReference type="ChEBI" id="CHEBI:29035"/>
        <label>1</label>
    </ligand>
</feature>
<feature type="binding site" evidence="1">
    <location>
        <position position="407"/>
    </location>
    <ligand>
        <name>Mn(2+)</name>
        <dbReference type="ChEBI" id="CHEBI:29035"/>
        <label>1</label>
    </ligand>
</feature>
<feature type="binding site" evidence="1">
    <location>
        <position position="444"/>
    </location>
    <ligand>
        <name>Mn(2+)</name>
        <dbReference type="ChEBI" id="CHEBI:29035"/>
        <label>2</label>
    </ligand>
</feature>
<feature type="binding site" evidence="1">
    <location>
        <position position="445"/>
    </location>
    <ligand>
        <name>Mn(2+)</name>
        <dbReference type="ChEBI" id="CHEBI:29035"/>
        <label>2</label>
    </ligand>
</feature>
<feature type="binding site" evidence="1">
    <location>
        <position position="463"/>
    </location>
    <ligand>
        <name>Mn(2+)</name>
        <dbReference type="ChEBI" id="CHEBI:29035"/>
        <label>1</label>
    </ligand>
</feature>
<sequence length="514" mass="56096">MTTTKRPIALLILDGWGYRENTHMNAIFHAKTPVLDRLNAQYPHGLISGSGLDVGLPDGQMGNSEVGHINLGSGRIVYQELTRISKAISDHEFETNPALCDAVDSAINAGGAVHIMGLLSPGGVHSHEEHIEAMCRMAVARGATKVYLHAFLDGRDTPPRSAKASLSHFDDLFTTLGHGRVASIIGRYFAMDRDNRWDRVSQAYELITQGKAKFQYDNAVTALEAAYARDENDEFVSSSAITDVDGKVATLQDGDALIFMNFRADRARQITRSFIHPDFDGFERAVVPKMHFVTLTEYAGDITAPIAYPSENLVNTLGEVLQNRGRTQLRISETEKYAHVTFFFNGGKEEPFEGEDRILINSPKVATYDLQPEMSSTELTDKLVAAIESTKYDVIICNYPNGDMVGHTGNFDAAVKACEAVDTCIGRVVEALAKVGGECIITADHGNAEQMTDETTGQAHTAHTSELVPFIFVGRDATIDKGGKLSDVAPTILQLIGETIPAEMKGKPLIHIKE</sequence>
<organism>
    <name type="scientific">Shewanella sp. (strain W3-18-1)</name>
    <dbReference type="NCBI Taxonomy" id="351745"/>
    <lineage>
        <taxon>Bacteria</taxon>
        <taxon>Pseudomonadati</taxon>
        <taxon>Pseudomonadota</taxon>
        <taxon>Gammaproteobacteria</taxon>
        <taxon>Alteromonadales</taxon>
        <taxon>Shewanellaceae</taxon>
        <taxon>Shewanella</taxon>
    </lineage>
</organism>
<proteinExistence type="inferred from homology"/>